<gene>
    <name evidence="1" type="primary">rpmJ</name>
    <name type="ordered locus">Swoo_4669</name>
</gene>
<protein>
    <recommendedName>
        <fullName evidence="1">Large ribosomal subunit protein bL36</fullName>
    </recommendedName>
    <alternativeName>
        <fullName evidence="2">50S ribosomal protein L36</fullName>
    </alternativeName>
</protein>
<keyword id="KW-1185">Reference proteome</keyword>
<keyword id="KW-0687">Ribonucleoprotein</keyword>
<keyword id="KW-0689">Ribosomal protein</keyword>
<organism>
    <name type="scientific">Shewanella woodyi (strain ATCC 51908 / MS32)</name>
    <dbReference type="NCBI Taxonomy" id="392500"/>
    <lineage>
        <taxon>Bacteria</taxon>
        <taxon>Pseudomonadati</taxon>
        <taxon>Pseudomonadota</taxon>
        <taxon>Gammaproteobacteria</taxon>
        <taxon>Alteromonadales</taxon>
        <taxon>Shewanellaceae</taxon>
        <taxon>Shewanella</taxon>
    </lineage>
</organism>
<accession>B1KMW2</accession>
<sequence length="37" mass="4277">MKVRASVKKICRNCKIIKRSGVVRVICVEPKHKQRQG</sequence>
<proteinExistence type="inferred from homology"/>
<comment type="similarity">
    <text evidence="1">Belongs to the bacterial ribosomal protein bL36 family.</text>
</comment>
<evidence type="ECO:0000255" key="1">
    <source>
        <dbReference type="HAMAP-Rule" id="MF_00251"/>
    </source>
</evidence>
<evidence type="ECO:0000305" key="2"/>
<name>RL36_SHEWM</name>
<dbReference type="EMBL" id="CP000961">
    <property type="protein sequence ID" value="ACA88919.1"/>
    <property type="molecule type" value="Genomic_DNA"/>
</dbReference>
<dbReference type="SMR" id="B1KMW2"/>
<dbReference type="STRING" id="392500.Swoo_4669"/>
<dbReference type="KEGG" id="swd:Swoo_4669"/>
<dbReference type="eggNOG" id="COG0257">
    <property type="taxonomic scope" value="Bacteria"/>
</dbReference>
<dbReference type="HOGENOM" id="CLU_135723_6_2_6"/>
<dbReference type="Proteomes" id="UP000002168">
    <property type="component" value="Chromosome"/>
</dbReference>
<dbReference type="GO" id="GO:0005737">
    <property type="term" value="C:cytoplasm"/>
    <property type="evidence" value="ECO:0007669"/>
    <property type="project" value="UniProtKB-ARBA"/>
</dbReference>
<dbReference type="GO" id="GO:1990904">
    <property type="term" value="C:ribonucleoprotein complex"/>
    <property type="evidence" value="ECO:0007669"/>
    <property type="project" value="UniProtKB-KW"/>
</dbReference>
<dbReference type="GO" id="GO:0005840">
    <property type="term" value="C:ribosome"/>
    <property type="evidence" value="ECO:0007669"/>
    <property type="project" value="UniProtKB-KW"/>
</dbReference>
<dbReference type="GO" id="GO:0003735">
    <property type="term" value="F:structural constituent of ribosome"/>
    <property type="evidence" value="ECO:0007669"/>
    <property type="project" value="InterPro"/>
</dbReference>
<dbReference type="GO" id="GO:0006412">
    <property type="term" value="P:translation"/>
    <property type="evidence" value="ECO:0007669"/>
    <property type="project" value="UniProtKB-UniRule"/>
</dbReference>
<dbReference type="HAMAP" id="MF_00251">
    <property type="entry name" value="Ribosomal_bL36"/>
    <property type="match status" value="1"/>
</dbReference>
<dbReference type="InterPro" id="IPR000473">
    <property type="entry name" value="Ribosomal_bL36"/>
</dbReference>
<dbReference type="InterPro" id="IPR035977">
    <property type="entry name" value="Ribosomal_bL36_sp"/>
</dbReference>
<dbReference type="NCBIfam" id="TIGR01022">
    <property type="entry name" value="rpmJ_bact"/>
    <property type="match status" value="1"/>
</dbReference>
<dbReference type="PANTHER" id="PTHR42888">
    <property type="entry name" value="50S RIBOSOMAL PROTEIN L36, CHLOROPLASTIC"/>
    <property type="match status" value="1"/>
</dbReference>
<dbReference type="PANTHER" id="PTHR42888:SF1">
    <property type="entry name" value="LARGE RIBOSOMAL SUBUNIT PROTEIN BL36C"/>
    <property type="match status" value="1"/>
</dbReference>
<dbReference type="Pfam" id="PF00444">
    <property type="entry name" value="Ribosomal_L36"/>
    <property type="match status" value="1"/>
</dbReference>
<dbReference type="SUPFAM" id="SSF57840">
    <property type="entry name" value="Ribosomal protein L36"/>
    <property type="match status" value="1"/>
</dbReference>
<dbReference type="PROSITE" id="PS00828">
    <property type="entry name" value="RIBOSOMAL_L36"/>
    <property type="match status" value="1"/>
</dbReference>
<feature type="chain" id="PRO_1000101070" description="Large ribosomal subunit protein bL36">
    <location>
        <begin position="1"/>
        <end position="37"/>
    </location>
</feature>
<reference key="1">
    <citation type="submission" date="2008-02" db="EMBL/GenBank/DDBJ databases">
        <title>Complete sequence of Shewanella woodyi ATCC 51908.</title>
        <authorList>
            <consortium name="US DOE Joint Genome Institute"/>
            <person name="Copeland A."/>
            <person name="Lucas S."/>
            <person name="Lapidus A."/>
            <person name="Glavina del Rio T."/>
            <person name="Dalin E."/>
            <person name="Tice H."/>
            <person name="Bruce D."/>
            <person name="Goodwin L."/>
            <person name="Pitluck S."/>
            <person name="Sims D."/>
            <person name="Brettin T."/>
            <person name="Detter J.C."/>
            <person name="Han C."/>
            <person name="Kuske C.R."/>
            <person name="Schmutz J."/>
            <person name="Larimer F."/>
            <person name="Land M."/>
            <person name="Hauser L."/>
            <person name="Kyrpides N."/>
            <person name="Lykidis A."/>
            <person name="Zhao J.-S."/>
            <person name="Richardson P."/>
        </authorList>
    </citation>
    <scope>NUCLEOTIDE SEQUENCE [LARGE SCALE GENOMIC DNA]</scope>
    <source>
        <strain>ATCC 51908 / MS32</strain>
    </source>
</reference>